<proteinExistence type="inferred from homology"/>
<organism>
    <name type="scientific">Staphylococcus aureus (strain Mu50 / ATCC 700699)</name>
    <dbReference type="NCBI Taxonomy" id="158878"/>
    <lineage>
        <taxon>Bacteria</taxon>
        <taxon>Bacillati</taxon>
        <taxon>Bacillota</taxon>
        <taxon>Bacilli</taxon>
        <taxon>Bacillales</taxon>
        <taxon>Staphylococcaceae</taxon>
        <taxon>Staphylococcus</taxon>
    </lineage>
</organism>
<gene>
    <name type="primary">pgcA</name>
    <name type="ordered locus">SAV2491</name>
</gene>
<reference key="1">
    <citation type="journal article" date="2001" name="Lancet">
        <title>Whole genome sequencing of meticillin-resistant Staphylococcus aureus.</title>
        <authorList>
            <person name="Kuroda M."/>
            <person name="Ohta T."/>
            <person name="Uchiyama I."/>
            <person name="Baba T."/>
            <person name="Yuzawa H."/>
            <person name="Kobayashi I."/>
            <person name="Cui L."/>
            <person name="Oguchi A."/>
            <person name="Aoki K."/>
            <person name="Nagai Y."/>
            <person name="Lian J.-Q."/>
            <person name="Ito T."/>
            <person name="Kanamori M."/>
            <person name="Matsumaru H."/>
            <person name="Maruyama A."/>
            <person name="Murakami H."/>
            <person name="Hosoyama A."/>
            <person name="Mizutani-Ui Y."/>
            <person name="Takahashi N.K."/>
            <person name="Sawano T."/>
            <person name="Inoue R."/>
            <person name="Kaito C."/>
            <person name="Sekimizu K."/>
            <person name="Hirakawa H."/>
            <person name="Kuhara S."/>
            <person name="Goto S."/>
            <person name="Yabuzaki J."/>
            <person name="Kanehisa M."/>
            <person name="Yamashita A."/>
            <person name="Oshima K."/>
            <person name="Furuya K."/>
            <person name="Yoshino C."/>
            <person name="Shiba T."/>
            <person name="Hattori M."/>
            <person name="Ogasawara N."/>
            <person name="Hayashi H."/>
            <person name="Hiramatsu K."/>
        </authorList>
    </citation>
    <scope>NUCLEOTIDE SEQUENCE [LARGE SCALE GENOMIC DNA]</scope>
    <source>
        <strain>Mu50 / ATCC 700699</strain>
    </source>
</reference>
<keyword id="KW-0119">Carbohydrate metabolism</keyword>
<keyword id="KW-0313">Glucose metabolism</keyword>
<keyword id="KW-0413">Isomerase</keyword>
<keyword id="KW-0460">Magnesium</keyword>
<keyword id="KW-0479">Metal-binding</keyword>
<keyword id="KW-0597">Phosphoprotein</keyword>
<name>PGCA_STAAM</name>
<sequence length="552" mass="62359">MKGCLATMDKELWIERANDSLVKHFYEQQSDIEQREGFESKLTFGTAGIRGKFGLGEGRLNKFTIEKLALGLARYLNAQTNSPTIVIHYDIRHLSTEFAQIIANVLANHQITVYLPDTYKTTPELSFAVRNLNTTAGIMITASHNPKDYNGIKVYGSDGAQLSTDASELASRYIEEVGDPLQIDIPISKQNTSYIKPFPKSVTDDYMKHIQNMIGYIPKSDLQVVFTSLHGTSVPIVPELLKSLNFNQFNLVDAQCKPDPNFSSVQSANPEDHRAFDQAVELANKSHADLLISTDPDADRLGIAERDAHGHITYFNGNQIGALLLNYRIQQTSQLRHRLMIQSIVSSELTKSLARYNNVKYKEVLTGFKFIAQEIRQLDDHQNMIFAFEESYGFLSEPFVRDKDAVQIVPLIIKYASELKLYGKTLKDELEQIYQTVGRHEDTLFSHTLEGLEGKKKIESIMTHFRSNPPQEIQGLKVKAIEDYLTSEVYHLDKDTTSQINSSKSNVIRVLFDEGFIALRPSGTEPKIKLYVSLKCPDFDDVAQKINAMIFS</sequence>
<protein>
    <recommendedName>
        <fullName>Phosphoglucomutase</fullName>
        <shortName>PGM</shortName>
        <ecNumber>5.4.2.2</ecNumber>
    </recommendedName>
    <alternativeName>
        <fullName>Alpha-phosphoglucomutase</fullName>
    </alternativeName>
    <alternativeName>
        <fullName>Glucose phosphomutase</fullName>
    </alternativeName>
</protein>
<evidence type="ECO:0000250" key="1"/>
<evidence type="ECO:0000305" key="2"/>
<accession>Q99RE2</accession>
<feature type="chain" id="PRO_0000308340" description="Phosphoglucomutase">
    <location>
        <begin position="1"/>
        <end position="552"/>
    </location>
</feature>
<feature type="active site" description="Phosphoserine intermediate" evidence="1">
    <location>
        <position position="143"/>
    </location>
</feature>
<feature type="binding site" description="via phosphate group" evidence="1">
    <location>
        <position position="143"/>
    </location>
    <ligand>
        <name>Mg(2+)</name>
        <dbReference type="ChEBI" id="CHEBI:18420"/>
    </ligand>
</feature>
<feature type="binding site" evidence="1">
    <location>
        <position position="295"/>
    </location>
    <ligand>
        <name>Mg(2+)</name>
        <dbReference type="ChEBI" id="CHEBI:18420"/>
    </ligand>
</feature>
<feature type="binding site" evidence="1">
    <location>
        <position position="297"/>
    </location>
    <ligand>
        <name>Mg(2+)</name>
        <dbReference type="ChEBI" id="CHEBI:18420"/>
    </ligand>
</feature>
<feature type="binding site" evidence="1">
    <location>
        <position position="299"/>
    </location>
    <ligand>
        <name>Mg(2+)</name>
        <dbReference type="ChEBI" id="CHEBI:18420"/>
    </ligand>
</feature>
<comment type="function">
    <text evidence="1">Catalyzes the interconversion between glucose-6-phosphate and alpha-glucose-1-phosphate. This is the first step in the biosynthesis of diglucosyl-diacylglycerol (Glc2-DAG), i.e. the predominant glycolipid found in the S.aureus membrane, which is also used as a membrane anchor for lipoteichoic acid (LTA) (By similarity).</text>
</comment>
<comment type="catalytic activity">
    <reaction>
        <text>alpha-D-glucose 1-phosphate = alpha-D-glucose 6-phosphate</text>
        <dbReference type="Rhea" id="RHEA:23536"/>
        <dbReference type="ChEBI" id="CHEBI:58225"/>
        <dbReference type="ChEBI" id="CHEBI:58601"/>
        <dbReference type="EC" id="5.4.2.2"/>
    </reaction>
</comment>
<comment type="cofactor">
    <cofactor evidence="1">
        <name>Mg(2+)</name>
        <dbReference type="ChEBI" id="CHEBI:18420"/>
    </cofactor>
    <text evidence="1">Binds 1 Mg(2+) ion per subunit.</text>
</comment>
<comment type="pathway">
    <text>Glycolipid metabolism; diglucosyl-diacylglycerol biosynthesis.</text>
</comment>
<comment type="similarity">
    <text evidence="2">Belongs to the phosphohexose mutase family.</text>
</comment>
<comment type="sequence caution" evidence="2">
    <conflict type="erroneous initiation">
        <sequence resource="EMBL-CDS" id="BAB58653"/>
    </conflict>
</comment>
<dbReference type="EC" id="5.4.2.2"/>
<dbReference type="EMBL" id="BA000017">
    <property type="protein sequence ID" value="BAB58653.1"/>
    <property type="status" value="ALT_INIT"/>
    <property type="molecule type" value="Genomic_DNA"/>
</dbReference>
<dbReference type="SMR" id="Q99RE2"/>
<dbReference type="KEGG" id="sav:SAV2491"/>
<dbReference type="HOGENOM" id="CLU_016950_0_0_9"/>
<dbReference type="UniPathway" id="UPA00894"/>
<dbReference type="Proteomes" id="UP000002481">
    <property type="component" value="Chromosome"/>
</dbReference>
<dbReference type="GO" id="GO:0000287">
    <property type="term" value="F:magnesium ion binding"/>
    <property type="evidence" value="ECO:0007669"/>
    <property type="project" value="InterPro"/>
</dbReference>
<dbReference type="GO" id="GO:0004614">
    <property type="term" value="F:phosphoglucomutase activity"/>
    <property type="evidence" value="ECO:0007669"/>
    <property type="project" value="UniProtKB-EC"/>
</dbReference>
<dbReference type="GO" id="GO:0008973">
    <property type="term" value="F:phosphopentomutase activity"/>
    <property type="evidence" value="ECO:0007669"/>
    <property type="project" value="TreeGrafter"/>
</dbReference>
<dbReference type="GO" id="GO:0009246">
    <property type="term" value="P:enterobacterial common antigen biosynthetic process"/>
    <property type="evidence" value="ECO:0007669"/>
    <property type="project" value="UniProtKB-UniPathway"/>
</dbReference>
<dbReference type="GO" id="GO:0006006">
    <property type="term" value="P:glucose metabolic process"/>
    <property type="evidence" value="ECO:0007669"/>
    <property type="project" value="UniProtKB-KW"/>
</dbReference>
<dbReference type="GO" id="GO:0006166">
    <property type="term" value="P:purine ribonucleoside salvage"/>
    <property type="evidence" value="ECO:0007669"/>
    <property type="project" value="TreeGrafter"/>
</dbReference>
<dbReference type="CDD" id="cd05799">
    <property type="entry name" value="PGM2"/>
    <property type="match status" value="1"/>
</dbReference>
<dbReference type="Gene3D" id="3.40.120.10">
    <property type="entry name" value="Alpha-D-Glucose-1,6-Bisphosphate, subunit A, domain 3"/>
    <property type="match status" value="3"/>
</dbReference>
<dbReference type="Gene3D" id="3.30.310.50">
    <property type="entry name" value="Alpha-D-phosphohexomutase, C-terminal domain"/>
    <property type="match status" value="1"/>
</dbReference>
<dbReference type="InterPro" id="IPR005844">
    <property type="entry name" value="A-D-PHexomutase_a/b/a-I"/>
</dbReference>
<dbReference type="InterPro" id="IPR016055">
    <property type="entry name" value="A-D-PHexomutase_a/b/a-I/II/III"/>
</dbReference>
<dbReference type="InterPro" id="IPR005845">
    <property type="entry name" value="A-D-PHexomutase_a/b/a-II"/>
</dbReference>
<dbReference type="InterPro" id="IPR005846">
    <property type="entry name" value="A-D-PHexomutase_a/b/a-III"/>
</dbReference>
<dbReference type="InterPro" id="IPR005843">
    <property type="entry name" value="A-D-PHexomutase_C"/>
</dbReference>
<dbReference type="InterPro" id="IPR036900">
    <property type="entry name" value="A-D-PHexomutase_C_sf"/>
</dbReference>
<dbReference type="InterPro" id="IPR016066">
    <property type="entry name" value="A-D-PHexomutase_CS"/>
</dbReference>
<dbReference type="InterPro" id="IPR005841">
    <property type="entry name" value="Alpha-D-phosphohexomutase_SF"/>
</dbReference>
<dbReference type="PANTHER" id="PTHR45745:SF1">
    <property type="entry name" value="PHOSPHOGLUCOMUTASE 2B-RELATED"/>
    <property type="match status" value="1"/>
</dbReference>
<dbReference type="PANTHER" id="PTHR45745">
    <property type="entry name" value="PHOSPHOMANNOMUTASE 45A"/>
    <property type="match status" value="1"/>
</dbReference>
<dbReference type="Pfam" id="PF02878">
    <property type="entry name" value="PGM_PMM_I"/>
    <property type="match status" value="1"/>
</dbReference>
<dbReference type="Pfam" id="PF02879">
    <property type="entry name" value="PGM_PMM_II"/>
    <property type="match status" value="1"/>
</dbReference>
<dbReference type="Pfam" id="PF02880">
    <property type="entry name" value="PGM_PMM_III"/>
    <property type="match status" value="1"/>
</dbReference>
<dbReference type="Pfam" id="PF00408">
    <property type="entry name" value="PGM_PMM_IV"/>
    <property type="match status" value="1"/>
</dbReference>
<dbReference type="PRINTS" id="PR00509">
    <property type="entry name" value="PGMPMM"/>
</dbReference>
<dbReference type="SUPFAM" id="SSF55957">
    <property type="entry name" value="Phosphoglucomutase, C-terminal domain"/>
    <property type="match status" value="1"/>
</dbReference>
<dbReference type="SUPFAM" id="SSF53738">
    <property type="entry name" value="Phosphoglucomutase, first 3 domains"/>
    <property type="match status" value="3"/>
</dbReference>
<dbReference type="PROSITE" id="PS00710">
    <property type="entry name" value="PGM_PMM"/>
    <property type="match status" value="1"/>
</dbReference>